<organism>
    <name type="scientific">Priestia megaterium</name>
    <name type="common">Bacillus megaterium</name>
    <dbReference type="NCBI Taxonomy" id="1404"/>
    <lineage>
        <taxon>Bacteria</taxon>
        <taxon>Bacillati</taxon>
        <taxon>Bacillota</taxon>
        <taxon>Bacilli</taxon>
        <taxon>Bacillales</taxon>
        <taxon>Bacillaceae</taxon>
        <taxon>Priestia</taxon>
    </lineage>
</organism>
<sequence>MYKDLEGKVVVITGSSTGLGKAMAIRFATEKAKVVVNYRSKEEEANSVLEEIKKVGGEAIAVKGDVTVESDVINLVQSSIKEFGKLDVMINNAGMENPVSSHEMSLSDWNKVIDTNLTGAFLGSREAIKYFVENDIKGTVINMSSVHEKIPWPLFVHYAASKGGMKLMTETLALEYAPKGIRVNNIGPGAINTPINAEKFADPEQRADVESMIPMGYIGEPEEIAAVAAWLASSEASYVTGITLFADGGMTQYPSFQAGRG</sequence>
<keyword id="KW-0309">Germination</keyword>
<keyword id="KW-0521">NADP</keyword>
<keyword id="KW-0560">Oxidoreductase</keyword>
<keyword id="KW-0749">Sporulation</keyword>
<name>DHG1_PRIMG</name>
<accession>P39482</accession>
<comment type="function">
    <text>May play some role in spore germination.</text>
</comment>
<comment type="catalytic activity">
    <reaction>
        <text>D-glucose + NAD(+) = D-glucono-1,5-lactone + NADH + H(+)</text>
        <dbReference type="Rhea" id="RHEA:14293"/>
        <dbReference type="ChEBI" id="CHEBI:4167"/>
        <dbReference type="ChEBI" id="CHEBI:15378"/>
        <dbReference type="ChEBI" id="CHEBI:16217"/>
        <dbReference type="ChEBI" id="CHEBI:57540"/>
        <dbReference type="ChEBI" id="CHEBI:57945"/>
        <dbReference type="EC" id="1.1.1.47"/>
    </reaction>
</comment>
<comment type="catalytic activity">
    <reaction>
        <text>D-glucose + NADP(+) = D-glucono-1,5-lactone + NADPH + H(+)</text>
        <dbReference type="Rhea" id="RHEA:14405"/>
        <dbReference type="ChEBI" id="CHEBI:4167"/>
        <dbReference type="ChEBI" id="CHEBI:15378"/>
        <dbReference type="ChEBI" id="CHEBI:16217"/>
        <dbReference type="ChEBI" id="CHEBI:57783"/>
        <dbReference type="ChEBI" id="CHEBI:58349"/>
        <dbReference type="EC" id="1.1.1.47"/>
    </reaction>
</comment>
<comment type="subunit">
    <text>Homotetramer.</text>
</comment>
<comment type="developmental stage">
    <text>Expressed during sporulation.</text>
</comment>
<comment type="miscellaneous">
    <text>Prefers NADP to NAD.</text>
</comment>
<comment type="similarity">
    <text evidence="3">Belongs to the short-chain dehydrogenases/reductases (SDR) family.</text>
</comment>
<dbReference type="EC" id="1.1.1.47"/>
<dbReference type="EMBL" id="D90043">
    <property type="protein sequence ID" value="BAA14099.1"/>
    <property type="molecule type" value="Genomic_DNA"/>
</dbReference>
<dbReference type="PIR" id="I39852">
    <property type="entry name" value="JS0385"/>
</dbReference>
<dbReference type="SMR" id="P39482"/>
<dbReference type="BRENDA" id="1.1.1.47">
    <property type="organism ID" value="656"/>
</dbReference>
<dbReference type="SABIO-RK" id="P39482"/>
<dbReference type="GO" id="GO:0047934">
    <property type="term" value="F:glucose 1-dehydrogenase (NAD+) activity"/>
    <property type="evidence" value="ECO:0007669"/>
    <property type="project" value="RHEA"/>
</dbReference>
<dbReference type="GO" id="GO:0047935">
    <property type="term" value="F:glucose 1-dehydrogenase (NADP+) activity"/>
    <property type="evidence" value="ECO:0007669"/>
    <property type="project" value="RHEA"/>
</dbReference>
<dbReference type="GO" id="GO:0030435">
    <property type="term" value="P:sporulation resulting in formation of a cellular spore"/>
    <property type="evidence" value="ECO:0007669"/>
    <property type="project" value="UniProtKB-KW"/>
</dbReference>
<dbReference type="CDD" id="cd05358">
    <property type="entry name" value="GlcDH_SDR_c"/>
    <property type="match status" value="1"/>
</dbReference>
<dbReference type="FunFam" id="3.40.50.720:FF:000248">
    <property type="entry name" value="Glucose 1-dehydrogenase"/>
    <property type="match status" value="1"/>
</dbReference>
<dbReference type="Gene3D" id="3.40.50.720">
    <property type="entry name" value="NAD(P)-binding Rossmann-like Domain"/>
    <property type="match status" value="1"/>
</dbReference>
<dbReference type="InterPro" id="IPR036291">
    <property type="entry name" value="NAD(P)-bd_dom_sf"/>
</dbReference>
<dbReference type="InterPro" id="IPR020904">
    <property type="entry name" value="Sc_DH/Rdtase_CS"/>
</dbReference>
<dbReference type="InterPro" id="IPR002347">
    <property type="entry name" value="SDR_fam"/>
</dbReference>
<dbReference type="NCBIfam" id="NF005559">
    <property type="entry name" value="PRK07231.1"/>
    <property type="match status" value="1"/>
</dbReference>
<dbReference type="NCBIfam" id="NF006493">
    <property type="entry name" value="PRK08936.1"/>
    <property type="match status" value="1"/>
</dbReference>
<dbReference type="PANTHER" id="PTHR43639">
    <property type="entry name" value="OXIDOREDUCTASE, SHORT-CHAIN DEHYDROGENASE/REDUCTASE FAMILY (AFU_ORTHOLOGUE AFUA_5G02870)"/>
    <property type="match status" value="1"/>
</dbReference>
<dbReference type="PANTHER" id="PTHR43639:SF1">
    <property type="entry name" value="SHORT-CHAIN DEHYDROGENASE_REDUCTASE FAMILY PROTEIN"/>
    <property type="match status" value="1"/>
</dbReference>
<dbReference type="Pfam" id="PF13561">
    <property type="entry name" value="adh_short_C2"/>
    <property type="match status" value="1"/>
</dbReference>
<dbReference type="PRINTS" id="PR00081">
    <property type="entry name" value="GDHRDH"/>
</dbReference>
<dbReference type="PRINTS" id="PR00080">
    <property type="entry name" value="SDRFAMILY"/>
</dbReference>
<dbReference type="SUPFAM" id="SSF51735">
    <property type="entry name" value="NAD(P)-binding Rossmann-fold domains"/>
    <property type="match status" value="1"/>
</dbReference>
<dbReference type="PROSITE" id="PS00061">
    <property type="entry name" value="ADH_SHORT"/>
    <property type="match status" value="1"/>
</dbReference>
<reference key="1">
    <citation type="journal article" date="1990" name="J. Ferment. Bioeng.">
        <title>Structure of isozyme genes of glucose dehydrogenase from Bacillus megaterium IAM1030.</title>
        <authorList>
            <person name="Mitamura T."/>
            <person name="Ebora R.V."/>
            <person name="Nakai T."/>
            <person name="Makino Y."/>
            <person name="Negoro S."/>
            <person name="Urabe I."/>
            <person name="Okada H."/>
        </authorList>
    </citation>
    <scope>NUCLEOTIDE SEQUENCE [GENOMIC DNA]</scope>
    <source>
        <strain>IAM 1030 / JCM 20016</strain>
    </source>
</reference>
<feature type="chain" id="PRO_0000054609" description="Glucose 1-dehydrogenase 1">
    <location>
        <begin position="1"/>
        <end position="261"/>
    </location>
</feature>
<feature type="active site" description="Proton acceptor" evidence="2">
    <location>
        <position position="158"/>
    </location>
</feature>
<feature type="binding site" evidence="1">
    <location>
        <begin position="11"/>
        <end position="35"/>
    </location>
    <ligand>
        <name>NADP(+)</name>
        <dbReference type="ChEBI" id="CHEBI:58349"/>
    </ligand>
</feature>
<feature type="binding site" evidence="1">
    <location>
        <position position="145"/>
    </location>
    <ligand>
        <name>substrate</name>
    </ligand>
</feature>
<evidence type="ECO:0000250" key="1"/>
<evidence type="ECO:0000255" key="2">
    <source>
        <dbReference type="PROSITE-ProRule" id="PRU10001"/>
    </source>
</evidence>
<evidence type="ECO:0000305" key="3"/>
<protein>
    <recommendedName>
        <fullName>Glucose 1-dehydrogenase 1</fullName>
        <ecNumber>1.1.1.47</ecNumber>
    </recommendedName>
    <alternativeName>
        <fullName>GLCDH-I</fullName>
    </alternativeName>
</protein>
<proteinExistence type="evidence at transcript level"/>
<gene>
    <name type="primary">gdhI</name>
</gene>